<sequence>MTIQLPPILIRADHLQTYDERKAIVASALESGYTHIILRPEDEALRHLGRYTAILADGKNLMYSGERIGVLLNLTGAEEMEEAYSLKNAVPNLIISPENWKVIPLENLISRFQNAETSVYICVKTPEEARLAFQTMEVGCDGIVITPDGPADLAAFSGIRNDEYPIVDLETAVVTKISTLSLGDRVCIDTCSLLERGEGMLIGSQSSCLFLVCSESFESEYVNSRPFRVNAGAVHSYILCPDGTTKYLSEIASGNELLSRMPDGNLRTVNVGRVKIEIRPMLYIEAKAGGKTYSVVLQNAETIRLGTPSGAVSVSDLAIGDLVYVRLESGGRHFGHTMAETICEK</sequence>
<dbReference type="EC" id="1.4.1.24" evidence="1"/>
<dbReference type="EMBL" id="CP000559">
    <property type="protein sequence ID" value="ABN07814.1"/>
    <property type="molecule type" value="Genomic_DNA"/>
</dbReference>
<dbReference type="RefSeq" id="WP_011834017.1">
    <property type="nucleotide sequence ID" value="NC_008942.1"/>
</dbReference>
<dbReference type="STRING" id="410358.Mlab_1653"/>
<dbReference type="GeneID" id="4794393"/>
<dbReference type="KEGG" id="mla:Mlab_1653"/>
<dbReference type="eggNOG" id="arCOG04353">
    <property type="taxonomic scope" value="Archaea"/>
</dbReference>
<dbReference type="HOGENOM" id="CLU_056379_0_0_2"/>
<dbReference type="OrthoDB" id="10265at2157"/>
<dbReference type="Proteomes" id="UP000000365">
    <property type="component" value="Chromosome"/>
</dbReference>
<dbReference type="GO" id="GO:0003856">
    <property type="term" value="F:3-dehydroquinate synthase activity"/>
    <property type="evidence" value="ECO:0007669"/>
    <property type="project" value="InterPro"/>
</dbReference>
<dbReference type="GO" id="GO:0102042">
    <property type="term" value="F:dehydroquinate synthase activity"/>
    <property type="evidence" value="ECO:0007669"/>
    <property type="project" value="UniProtKB-EC"/>
</dbReference>
<dbReference type="GO" id="GO:0051287">
    <property type="term" value="F:NAD binding"/>
    <property type="evidence" value="ECO:0007669"/>
    <property type="project" value="UniProtKB-UniRule"/>
</dbReference>
<dbReference type="GO" id="GO:0008652">
    <property type="term" value="P:amino acid biosynthetic process"/>
    <property type="evidence" value="ECO:0007669"/>
    <property type="project" value="UniProtKB-KW"/>
</dbReference>
<dbReference type="GO" id="GO:0009073">
    <property type="term" value="P:aromatic amino acid family biosynthetic process"/>
    <property type="evidence" value="ECO:0007669"/>
    <property type="project" value="UniProtKB-UniRule"/>
</dbReference>
<dbReference type="HAMAP" id="MF_01244">
    <property type="entry name" value="Arch_DHQ_synthase"/>
    <property type="match status" value="1"/>
</dbReference>
<dbReference type="InterPro" id="IPR002812">
    <property type="entry name" value="DHQ_synth"/>
</dbReference>
<dbReference type="PANTHER" id="PTHR33563">
    <property type="match status" value="1"/>
</dbReference>
<dbReference type="PANTHER" id="PTHR33563:SF1">
    <property type="entry name" value="3-DEHYDROQUINATE SYNTHASE"/>
    <property type="match status" value="1"/>
</dbReference>
<dbReference type="Pfam" id="PF01959">
    <property type="entry name" value="DHQS"/>
    <property type="match status" value="1"/>
</dbReference>
<comment type="function">
    <text evidence="1">Catalyzes the oxidative deamination and cyclization of 2-amino-3,7-dideoxy-D-threo-hept-6-ulosonic acid (ADH) to yield 3-dehydroquinate (DHQ), which is fed into the canonical shikimic pathway of aromatic amino acid biosynthesis.</text>
</comment>
<comment type="catalytic activity">
    <reaction evidence="1">
        <text>2-amino-2,3,7-trideoxy-D-lyxo-hept-6-ulosonate + NAD(+) + H2O = 3-dehydroquinate + NH4(+) + NADH + H(+)</text>
        <dbReference type="Rhea" id="RHEA:25956"/>
        <dbReference type="ChEBI" id="CHEBI:15377"/>
        <dbReference type="ChEBI" id="CHEBI:15378"/>
        <dbReference type="ChEBI" id="CHEBI:28938"/>
        <dbReference type="ChEBI" id="CHEBI:32364"/>
        <dbReference type="ChEBI" id="CHEBI:57540"/>
        <dbReference type="ChEBI" id="CHEBI:57945"/>
        <dbReference type="ChEBI" id="CHEBI:58859"/>
        <dbReference type="EC" id="1.4.1.24"/>
    </reaction>
</comment>
<comment type="similarity">
    <text evidence="1">Belongs to the archaeal-type DHQ synthase family.</text>
</comment>
<organism>
    <name type="scientific">Methanocorpusculum labreanum (strain ATCC 43576 / DSM 4855 / Z)</name>
    <dbReference type="NCBI Taxonomy" id="410358"/>
    <lineage>
        <taxon>Archaea</taxon>
        <taxon>Methanobacteriati</taxon>
        <taxon>Methanobacteriota</taxon>
        <taxon>Stenosarchaea group</taxon>
        <taxon>Methanomicrobia</taxon>
        <taxon>Methanomicrobiales</taxon>
        <taxon>Methanocorpusculaceae</taxon>
        <taxon>Methanocorpusculum</taxon>
    </lineage>
</organism>
<keyword id="KW-0028">Amino-acid biosynthesis</keyword>
<keyword id="KW-0057">Aromatic amino acid biosynthesis</keyword>
<keyword id="KW-0520">NAD</keyword>
<keyword id="KW-0560">Oxidoreductase</keyword>
<keyword id="KW-1185">Reference proteome</keyword>
<gene>
    <name evidence="1" type="primary">aroB'</name>
    <name type="ordered locus">Mlab_1653</name>
</gene>
<protein>
    <recommendedName>
        <fullName evidence="1">3-dehydroquinate synthase</fullName>
        <shortName evidence="1">DHQ synthase</shortName>
        <ecNumber evidence="1">1.4.1.24</ecNumber>
    </recommendedName>
    <alternativeName>
        <fullName evidence="1">3-dehydroquinate synthase II</fullName>
    </alternativeName>
</protein>
<name>DHQS_METLZ</name>
<accession>A2SU08</accession>
<feature type="chain" id="PRO_0000372050" description="3-dehydroquinate synthase">
    <location>
        <begin position="1"/>
        <end position="345"/>
    </location>
</feature>
<reference key="1">
    <citation type="journal article" date="2009" name="Stand. Genomic Sci.">
        <title>Complete genome sequence of Methanocorpusculum labreanum type strain Z.</title>
        <authorList>
            <person name="Anderson I.J."/>
            <person name="Sieprawska-Lupa M."/>
            <person name="Goltsman E."/>
            <person name="Lapidus A."/>
            <person name="Copeland A."/>
            <person name="Glavina Del Rio T."/>
            <person name="Tice H."/>
            <person name="Dalin E."/>
            <person name="Barry K."/>
            <person name="Pitluck S."/>
            <person name="Hauser L."/>
            <person name="Land M."/>
            <person name="Lucas S."/>
            <person name="Richardson P."/>
            <person name="Whitman W.B."/>
            <person name="Kyrpides N.C."/>
        </authorList>
    </citation>
    <scope>NUCLEOTIDE SEQUENCE [LARGE SCALE GENOMIC DNA]</scope>
    <source>
        <strain>ATCC 43576 / DSM 4855 / Z</strain>
    </source>
</reference>
<evidence type="ECO:0000255" key="1">
    <source>
        <dbReference type="HAMAP-Rule" id="MF_01244"/>
    </source>
</evidence>
<proteinExistence type="inferred from homology"/>